<evidence type="ECO:0000250" key="1">
    <source>
        <dbReference type="UniProtKB" id="Q53TN4"/>
    </source>
</evidence>
<evidence type="ECO:0000250" key="2">
    <source>
        <dbReference type="UniProtKB" id="Q8K385"/>
    </source>
</evidence>
<evidence type="ECO:0000255" key="3"/>
<evidence type="ECO:0000255" key="4">
    <source>
        <dbReference type="PROSITE-ProRule" id="PRU00242"/>
    </source>
</evidence>
<evidence type="ECO:0000255" key="5">
    <source>
        <dbReference type="PROSITE-ProRule" id="PRU00246"/>
    </source>
</evidence>
<evidence type="ECO:0000255" key="6">
    <source>
        <dbReference type="PROSITE-ProRule" id="PRU00363"/>
    </source>
</evidence>
<evidence type="ECO:0000305" key="7"/>
<proteinExistence type="evidence at transcript level"/>
<keyword id="KW-0249">Electron transport</keyword>
<keyword id="KW-0325">Glycoprotein</keyword>
<keyword id="KW-0408">Iron</keyword>
<keyword id="KW-0472">Membrane</keyword>
<keyword id="KW-0479">Metal-binding</keyword>
<keyword id="KW-0560">Oxidoreductase</keyword>
<keyword id="KW-1185">Reference proteome</keyword>
<keyword id="KW-0812">Transmembrane</keyword>
<keyword id="KW-1133">Transmembrane helix</keyword>
<keyword id="KW-0813">Transport</keyword>
<protein>
    <recommendedName>
        <fullName>Putative ferric-chelate reductase 1</fullName>
        <ecNumber>1.-.-.-</ecNumber>
    </recommendedName>
</protein>
<reference key="1">
    <citation type="submission" date="2007-04" db="EMBL/GenBank/DDBJ databases">
        <authorList>
            <consortium name="NIH - Zebrafish Gene Collection (ZGC) project"/>
        </authorList>
    </citation>
    <scope>NUCLEOTIDE SEQUENCE [LARGE SCALE MRNA]</scope>
    <source>
        <strain>SJD</strain>
    </source>
</reference>
<gene>
    <name type="primary">frrs1</name>
    <name type="ORF">zgc:163022</name>
</gene>
<comment type="function">
    <text evidence="2">Putative ferric-chelate reductases reduce Fe(3+) to Fe(2+) before its transport from the endosome to the cytoplasm.</text>
</comment>
<comment type="cofactor">
    <cofactor evidence="1">
        <name>heme b</name>
        <dbReference type="ChEBI" id="CHEBI:60344"/>
    </cofactor>
    <text evidence="1">Binds 2 heme b groups non-covalently.</text>
</comment>
<comment type="subcellular location">
    <subcellularLocation>
        <location evidence="7">Membrane</location>
        <topology evidence="7">Multi-pass membrane protein</topology>
    </subcellularLocation>
</comment>
<comment type="similarity">
    <text evidence="7">Belongs to the FRRS1 family.</text>
</comment>
<comment type="caution">
    <text evidence="7">The cytochrome b561 domain lacks the conserved His residue that binds iron in the heme. The reductase activity is therefore unsure in vivo.</text>
</comment>
<dbReference type="EC" id="1.-.-.-"/>
<dbReference type="EMBL" id="BC139692">
    <property type="protein sequence ID" value="AAI39693.1"/>
    <property type="molecule type" value="mRNA"/>
</dbReference>
<dbReference type="RefSeq" id="NP_001083026.1">
    <property type="nucleotide sequence ID" value="NM_001089557.1"/>
</dbReference>
<dbReference type="SMR" id="A4QP81"/>
<dbReference type="FunCoup" id="A4QP81">
    <property type="interactions" value="72"/>
</dbReference>
<dbReference type="STRING" id="7955.ENSDARP00000082157"/>
<dbReference type="GlyCosmos" id="A4QP81">
    <property type="glycosylation" value="2 sites, No reported glycans"/>
</dbReference>
<dbReference type="GeneID" id="100038777"/>
<dbReference type="KEGG" id="dre:100038777"/>
<dbReference type="AGR" id="ZFIN:ZDB-GENE-070424-101"/>
<dbReference type="ZFIN" id="ZDB-GENE-070424-101">
    <property type="gene designation" value="zgc:163022"/>
</dbReference>
<dbReference type="InParanoid" id="A4QP81"/>
<dbReference type="OrthoDB" id="2419613at2759"/>
<dbReference type="PhylomeDB" id="A4QP81"/>
<dbReference type="PRO" id="PR:A4QP81"/>
<dbReference type="Proteomes" id="UP000000437">
    <property type="component" value="Chromosome 24"/>
</dbReference>
<dbReference type="GO" id="GO:0016020">
    <property type="term" value="C:membrane"/>
    <property type="evidence" value="ECO:0000318"/>
    <property type="project" value="GO_Central"/>
</dbReference>
<dbReference type="GO" id="GO:0046872">
    <property type="term" value="F:metal ion binding"/>
    <property type="evidence" value="ECO:0007669"/>
    <property type="project" value="UniProtKB-KW"/>
</dbReference>
<dbReference type="GO" id="GO:0016491">
    <property type="term" value="F:oxidoreductase activity"/>
    <property type="evidence" value="ECO:0007669"/>
    <property type="project" value="UniProtKB-KW"/>
</dbReference>
<dbReference type="CDD" id="cd08760">
    <property type="entry name" value="Cyt_b561_FRRS1_like"/>
    <property type="match status" value="1"/>
</dbReference>
<dbReference type="CDD" id="cd09628">
    <property type="entry name" value="DOMON_SDR_2_like"/>
    <property type="match status" value="1"/>
</dbReference>
<dbReference type="CDD" id="cd08544">
    <property type="entry name" value="Reeler"/>
    <property type="match status" value="1"/>
</dbReference>
<dbReference type="FunFam" id="2.60.40.4060:FF:000003">
    <property type="entry name" value="Ferric chelate reductase 1"/>
    <property type="match status" value="1"/>
</dbReference>
<dbReference type="Gene3D" id="1.20.120.1770">
    <property type="match status" value="1"/>
</dbReference>
<dbReference type="Gene3D" id="2.60.40.4060">
    <property type="entry name" value="Reeler domain"/>
    <property type="match status" value="1"/>
</dbReference>
<dbReference type="InterPro" id="IPR006593">
    <property type="entry name" value="Cyt_b561/ferric_Rdtase_TM"/>
</dbReference>
<dbReference type="InterPro" id="IPR005018">
    <property type="entry name" value="DOMON_domain"/>
</dbReference>
<dbReference type="InterPro" id="IPR051237">
    <property type="entry name" value="Ferric-chelate_Red/DefProt"/>
</dbReference>
<dbReference type="InterPro" id="IPR002861">
    <property type="entry name" value="Reeler_dom"/>
</dbReference>
<dbReference type="InterPro" id="IPR042307">
    <property type="entry name" value="Reeler_sf"/>
</dbReference>
<dbReference type="PANTHER" id="PTHR45828">
    <property type="entry name" value="CYTOCHROME B561/FERRIC REDUCTASE TRANSMEMBRANE"/>
    <property type="match status" value="1"/>
</dbReference>
<dbReference type="PANTHER" id="PTHR45828:SF44">
    <property type="entry name" value="FERRIC-CHELATE REDUCTASE 1-RELATED"/>
    <property type="match status" value="1"/>
</dbReference>
<dbReference type="Pfam" id="PF03351">
    <property type="entry name" value="DOMON"/>
    <property type="match status" value="1"/>
</dbReference>
<dbReference type="Pfam" id="PF02014">
    <property type="entry name" value="Reeler"/>
    <property type="match status" value="1"/>
</dbReference>
<dbReference type="SMART" id="SM00665">
    <property type="entry name" value="B561"/>
    <property type="match status" value="1"/>
</dbReference>
<dbReference type="SMART" id="SM00664">
    <property type="entry name" value="DoH"/>
    <property type="match status" value="1"/>
</dbReference>
<dbReference type="PROSITE" id="PS50939">
    <property type="entry name" value="CYTOCHROME_B561"/>
    <property type="match status" value="1"/>
</dbReference>
<dbReference type="PROSITE" id="PS50836">
    <property type="entry name" value="DOMON"/>
    <property type="match status" value="1"/>
</dbReference>
<dbReference type="PROSITE" id="PS51019">
    <property type="entry name" value="REELIN"/>
    <property type="match status" value="1"/>
</dbReference>
<feature type="chain" id="PRO_0000314845" description="Putative ferric-chelate reductase 1">
    <location>
        <begin position="1"/>
        <end position="573"/>
    </location>
</feature>
<feature type="transmembrane region" description="Helical; Name=1" evidence="3">
    <location>
        <begin position="4"/>
        <end position="24"/>
    </location>
</feature>
<feature type="transmembrane region" description="Helical; Name=2" evidence="3">
    <location>
        <begin position="369"/>
        <end position="389"/>
    </location>
</feature>
<feature type="transmembrane region" description="Helical; Name=3" evidence="3">
    <location>
        <begin position="414"/>
        <end position="434"/>
    </location>
</feature>
<feature type="transmembrane region" description="Helical; Name=4" evidence="3">
    <location>
        <begin position="441"/>
        <end position="461"/>
    </location>
</feature>
<feature type="transmembrane region" description="Helical; Name=5" evidence="3">
    <location>
        <begin position="479"/>
        <end position="499"/>
    </location>
</feature>
<feature type="transmembrane region" description="Helical; Name=6" evidence="3">
    <location>
        <begin position="506"/>
        <end position="526"/>
    </location>
</feature>
<feature type="transmembrane region" description="Helical; Name=7" evidence="3">
    <location>
        <begin position="550"/>
        <end position="570"/>
    </location>
</feature>
<feature type="domain" description="Reelin" evidence="6">
    <location>
        <begin position="15"/>
        <end position="181"/>
    </location>
</feature>
<feature type="domain" description="DOMON" evidence="5">
    <location>
        <begin position="213"/>
        <end position="328"/>
    </location>
</feature>
<feature type="domain" description="Cytochrome b561" evidence="4">
    <location>
        <begin position="332"/>
        <end position="532"/>
    </location>
</feature>
<feature type="binding site" description="axial binding residue" evidence="1">
    <location>
        <position position="370"/>
    </location>
    <ligand>
        <name>heme b</name>
        <dbReference type="ChEBI" id="CHEBI:60344"/>
        <label>1</label>
    </ligand>
    <ligandPart>
        <name>Fe</name>
        <dbReference type="ChEBI" id="CHEBI:18248"/>
    </ligandPart>
</feature>
<feature type="binding site" description="axial binding residue" evidence="1">
    <location>
        <position position="411"/>
    </location>
    <ligand>
        <name>heme b</name>
        <dbReference type="ChEBI" id="CHEBI:60344"/>
        <label>2</label>
    </ligand>
    <ligandPart>
        <name>Fe</name>
        <dbReference type="ChEBI" id="CHEBI:18248"/>
    </ligandPart>
</feature>
<feature type="binding site" description="axial binding residue" evidence="1">
    <location>
        <position position="441"/>
    </location>
    <ligand>
        <name>heme b</name>
        <dbReference type="ChEBI" id="CHEBI:60344"/>
        <label>1</label>
    </ligand>
    <ligandPart>
        <name>Fe</name>
        <dbReference type="ChEBI" id="CHEBI:18248"/>
    </ligandPart>
</feature>
<feature type="binding site" description="axial binding residue" evidence="1">
    <location>
        <position position="477"/>
    </location>
    <ligand>
        <name>heme b</name>
        <dbReference type="ChEBI" id="CHEBI:60344"/>
        <label>2</label>
    </ligand>
    <ligandPart>
        <name>Fe</name>
        <dbReference type="ChEBI" id="CHEBI:18248"/>
    </ligandPart>
</feature>
<feature type="glycosylation site" description="N-linked (GlcNAc...) asparagine" evidence="3">
    <location>
        <position position="286"/>
    </location>
</feature>
<feature type="glycosylation site" description="N-linked (GlcNAc...) asparagine" evidence="3">
    <location>
        <position position="300"/>
    </location>
</feature>
<sequence length="573" mass="61284">MDGVCKSPQRLLFVLVSCFGLVQSYKNGLVSSVCGSMMPNHGANAQISSPPFTVTADKTTFKEGDQITVTLNSQTGYQFEGFMLQARQVGSSSSIGTFSVTASNMQLLTCDGVSARSVSHTSNSKKSSIQAKWTAPTSGQLGNIQFSVTFVKSDDTFWVGVKSSAVVYNGAGTTGTSTTPATVAPTVASIPGCGTTKVCFSQPNNCDPTTSTGCYFVAVQASSDQSEMRIEMFGPADGYVAIGFSDDQQMGNDDVYICGKDNNGNLQVQHAFNSGRSRPAILSLGNVTDILTAVTNGNINCSFISRNTISTASRAATTNEYYLMIAAGSSSQGNIQFHTNKYVTSTKVNLLNPSVVITSEEEFPPMVKAHGCLMLISWMATGSIGMIIARYLKGVAKGQGCFGKDFWFVAHVSLMTLSIIATAIAFIIVFVSAGDWAGGAHPVLGCLVMILSLIQPIVAAFRCEPQHERRFVFNWAHSCNAFAIKCLAVAAIFTGLALFEEYDSDGWMLKVMGGYLAWEALMYILQDLNLRAKKKDSQLCSCEPMRPETILLFLFIIGNLAFLIALLVGIGSA</sequence>
<name>FRRS1_DANRE</name>
<organism>
    <name type="scientific">Danio rerio</name>
    <name type="common">Zebrafish</name>
    <name type="synonym">Brachydanio rerio</name>
    <dbReference type="NCBI Taxonomy" id="7955"/>
    <lineage>
        <taxon>Eukaryota</taxon>
        <taxon>Metazoa</taxon>
        <taxon>Chordata</taxon>
        <taxon>Craniata</taxon>
        <taxon>Vertebrata</taxon>
        <taxon>Euteleostomi</taxon>
        <taxon>Actinopterygii</taxon>
        <taxon>Neopterygii</taxon>
        <taxon>Teleostei</taxon>
        <taxon>Ostariophysi</taxon>
        <taxon>Cypriniformes</taxon>
        <taxon>Danionidae</taxon>
        <taxon>Danioninae</taxon>
        <taxon>Danio</taxon>
    </lineage>
</organism>
<accession>A4QP81</accession>